<name>DSRB_SALCH</name>
<sequence>MKVNDRVTVKTDGGPRRPGVVLAVEEFSEGTMYLVSLEDYPLGIWFFNESGHQDGIFVEKAEQD</sequence>
<protein>
    <recommendedName>
        <fullName evidence="1">Protein DsrB</fullName>
    </recommendedName>
</protein>
<proteinExistence type="inferred from homology"/>
<organism>
    <name type="scientific">Salmonella choleraesuis (strain SC-B67)</name>
    <dbReference type="NCBI Taxonomy" id="321314"/>
    <lineage>
        <taxon>Bacteria</taxon>
        <taxon>Pseudomonadati</taxon>
        <taxon>Pseudomonadota</taxon>
        <taxon>Gammaproteobacteria</taxon>
        <taxon>Enterobacterales</taxon>
        <taxon>Enterobacteriaceae</taxon>
        <taxon>Salmonella</taxon>
    </lineage>
</organism>
<feature type="chain" id="PRO_0000201910" description="Protein DsrB">
    <location>
        <begin position="1"/>
        <end position="64"/>
    </location>
</feature>
<comment type="similarity">
    <text evidence="1">Belongs to the DsrB family.</text>
</comment>
<dbReference type="EMBL" id="AE017220">
    <property type="protein sequence ID" value="AAX65894.1"/>
    <property type="molecule type" value="Genomic_DNA"/>
</dbReference>
<dbReference type="RefSeq" id="WP_000867218.1">
    <property type="nucleotide sequence ID" value="NC_006905.1"/>
</dbReference>
<dbReference type="SMR" id="Q57N17"/>
<dbReference type="KEGG" id="sec:SCH_1988"/>
<dbReference type="HOGENOM" id="CLU_189289_0_0_6"/>
<dbReference type="Proteomes" id="UP000000538">
    <property type="component" value="Chromosome"/>
</dbReference>
<dbReference type="HAMAP" id="MF_01549">
    <property type="entry name" value="DsrB"/>
    <property type="match status" value="1"/>
</dbReference>
<dbReference type="InterPro" id="IPR019717">
    <property type="entry name" value="Dextransucrase_DSRB"/>
</dbReference>
<dbReference type="NCBIfam" id="NF007981">
    <property type="entry name" value="PRK10708.1"/>
    <property type="match status" value="1"/>
</dbReference>
<dbReference type="Pfam" id="PF10781">
    <property type="entry name" value="DSRB"/>
    <property type="match status" value="1"/>
</dbReference>
<gene>
    <name evidence="1" type="primary">dsrB</name>
    <name type="ordered locus">SCH_1988</name>
</gene>
<reference key="1">
    <citation type="journal article" date="2005" name="Nucleic Acids Res.">
        <title>The genome sequence of Salmonella enterica serovar Choleraesuis, a highly invasive and resistant zoonotic pathogen.</title>
        <authorList>
            <person name="Chiu C.-H."/>
            <person name="Tang P."/>
            <person name="Chu C."/>
            <person name="Hu S."/>
            <person name="Bao Q."/>
            <person name="Yu J."/>
            <person name="Chou Y.-Y."/>
            <person name="Wang H.-S."/>
            <person name="Lee Y.-S."/>
        </authorList>
    </citation>
    <scope>NUCLEOTIDE SEQUENCE [LARGE SCALE GENOMIC DNA]</scope>
    <source>
        <strain>SC-B67</strain>
    </source>
</reference>
<evidence type="ECO:0000255" key="1">
    <source>
        <dbReference type="HAMAP-Rule" id="MF_01549"/>
    </source>
</evidence>
<accession>Q57N17</accession>